<organism>
    <name type="scientific">Buchnera aphidicola subsp. Acyrthosiphon pisum (strain APS)</name>
    <name type="common">Acyrthosiphon pisum symbiotic bacterium</name>
    <dbReference type="NCBI Taxonomy" id="107806"/>
    <lineage>
        <taxon>Bacteria</taxon>
        <taxon>Pseudomonadati</taxon>
        <taxon>Pseudomonadota</taxon>
        <taxon>Gammaproteobacteria</taxon>
        <taxon>Enterobacterales</taxon>
        <taxon>Erwiniaceae</taxon>
        <taxon>Buchnera</taxon>
    </lineage>
</organism>
<gene>
    <name type="primary">rpsS</name>
    <name type="ordered locus">BU520</name>
</gene>
<dbReference type="EMBL" id="BA000003">
    <property type="protein sequence ID" value="BAB13213.1"/>
    <property type="molecule type" value="Genomic_DNA"/>
</dbReference>
<dbReference type="RefSeq" id="NP_240327.1">
    <property type="nucleotide sequence ID" value="NC_002528.1"/>
</dbReference>
<dbReference type="RefSeq" id="WP_009874471.1">
    <property type="nucleotide sequence ID" value="NZ_AP036055.1"/>
</dbReference>
<dbReference type="SMR" id="P57587"/>
<dbReference type="STRING" id="563178.BUAP5A_513"/>
<dbReference type="EnsemblBacteria" id="BAB13213">
    <property type="protein sequence ID" value="BAB13213"/>
    <property type="gene ID" value="BAB13213"/>
</dbReference>
<dbReference type="KEGG" id="buc:BU520"/>
<dbReference type="PATRIC" id="fig|107806.10.peg.525"/>
<dbReference type="eggNOG" id="COG0185">
    <property type="taxonomic scope" value="Bacteria"/>
</dbReference>
<dbReference type="HOGENOM" id="CLU_144911_0_1_6"/>
<dbReference type="Proteomes" id="UP000001806">
    <property type="component" value="Chromosome"/>
</dbReference>
<dbReference type="GO" id="GO:0005737">
    <property type="term" value="C:cytoplasm"/>
    <property type="evidence" value="ECO:0007669"/>
    <property type="project" value="UniProtKB-ARBA"/>
</dbReference>
<dbReference type="GO" id="GO:0015935">
    <property type="term" value="C:small ribosomal subunit"/>
    <property type="evidence" value="ECO:0007669"/>
    <property type="project" value="InterPro"/>
</dbReference>
<dbReference type="GO" id="GO:0019843">
    <property type="term" value="F:rRNA binding"/>
    <property type="evidence" value="ECO:0007669"/>
    <property type="project" value="UniProtKB-UniRule"/>
</dbReference>
<dbReference type="GO" id="GO:0003735">
    <property type="term" value="F:structural constituent of ribosome"/>
    <property type="evidence" value="ECO:0007669"/>
    <property type="project" value="InterPro"/>
</dbReference>
<dbReference type="GO" id="GO:0000028">
    <property type="term" value="P:ribosomal small subunit assembly"/>
    <property type="evidence" value="ECO:0007669"/>
    <property type="project" value="TreeGrafter"/>
</dbReference>
<dbReference type="GO" id="GO:0006412">
    <property type="term" value="P:translation"/>
    <property type="evidence" value="ECO:0007669"/>
    <property type="project" value="UniProtKB-UniRule"/>
</dbReference>
<dbReference type="FunFam" id="3.30.860.10:FF:000001">
    <property type="entry name" value="30S ribosomal protein S19"/>
    <property type="match status" value="1"/>
</dbReference>
<dbReference type="Gene3D" id="3.30.860.10">
    <property type="entry name" value="30s Ribosomal Protein S19, Chain A"/>
    <property type="match status" value="1"/>
</dbReference>
<dbReference type="HAMAP" id="MF_00531">
    <property type="entry name" value="Ribosomal_uS19"/>
    <property type="match status" value="1"/>
</dbReference>
<dbReference type="InterPro" id="IPR002222">
    <property type="entry name" value="Ribosomal_uS19"/>
</dbReference>
<dbReference type="InterPro" id="IPR005732">
    <property type="entry name" value="Ribosomal_uS19_bac-type"/>
</dbReference>
<dbReference type="InterPro" id="IPR020934">
    <property type="entry name" value="Ribosomal_uS19_CS"/>
</dbReference>
<dbReference type="InterPro" id="IPR023575">
    <property type="entry name" value="Ribosomal_uS19_SF"/>
</dbReference>
<dbReference type="NCBIfam" id="TIGR01050">
    <property type="entry name" value="rpsS_bact"/>
    <property type="match status" value="1"/>
</dbReference>
<dbReference type="PANTHER" id="PTHR11880">
    <property type="entry name" value="RIBOSOMAL PROTEIN S19P FAMILY MEMBER"/>
    <property type="match status" value="1"/>
</dbReference>
<dbReference type="PANTHER" id="PTHR11880:SF8">
    <property type="entry name" value="SMALL RIBOSOMAL SUBUNIT PROTEIN US19M"/>
    <property type="match status" value="1"/>
</dbReference>
<dbReference type="Pfam" id="PF00203">
    <property type="entry name" value="Ribosomal_S19"/>
    <property type="match status" value="1"/>
</dbReference>
<dbReference type="PIRSF" id="PIRSF002144">
    <property type="entry name" value="Ribosomal_S19"/>
    <property type="match status" value="1"/>
</dbReference>
<dbReference type="PRINTS" id="PR00975">
    <property type="entry name" value="RIBOSOMALS19"/>
</dbReference>
<dbReference type="SUPFAM" id="SSF54570">
    <property type="entry name" value="Ribosomal protein S19"/>
    <property type="match status" value="1"/>
</dbReference>
<dbReference type="PROSITE" id="PS00323">
    <property type="entry name" value="RIBOSOMAL_S19"/>
    <property type="match status" value="1"/>
</dbReference>
<evidence type="ECO:0000250" key="1"/>
<evidence type="ECO:0000305" key="2"/>
<feature type="chain" id="PRO_0000129794" description="Small ribosomal subunit protein uS19">
    <location>
        <begin position="1"/>
        <end position="92"/>
    </location>
</feature>
<comment type="function">
    <text evidence="1">Protein S19 forms a complex with S13 that binds strongly to the 16S ribosomal RNA.</text>
</comment>
<comment type="similarity">
    <text evidence="2">Belongs to the universal ribosomal protein uS19 family.</text>
</comment>
<keyword id="KW-1185">Reference proteome</keyword>
<keyword id="KW-0687">Ribonucleoprotein</keyword>
<keyword id="KW-0689">Ribosomal protein</keyword>
<keyword id="KW-0694">RNA-binding</keyword>
<keyword id="KW-0699">rRNA-binding</keyword>
<name>RS19_BUCAI</name>
<proteinExistence type="inferred from homology"/>
<reference key="1">
    <citation type="journal article" date="2000" name="Nature">
        <title>Genome sequence of the endocellular bacterial symbiont of aphids Buchnera sp. APS.</title>
        <authorList>
            <person name="Shigenobu S."/>
            <person name="Watanabe H."/>
            <person name="Hattori M."/>
            <person name="Sakaki Y."/>
            <person name="Ishikawa H."/>
        </authorList>
    </citation>
    <scope>NUCLEOTIDE SEQUENCE [LARGE SCALE GENOMIC DNA]</scope>
    <source>
        <strain>APS</strain>
    </source>
</reference>
<protein>
    <recommendedName>
        <fullName evidence="2">Small ribosomal subunit protein uS19</fullName>
    </recommendedName>
    <alternativeName>
        <fullName>30S ribosomal protein S19</fullName>
    </alternativeName>
</protein>
<sequence>MPRSLKKGPFIDISLLKKVEKSVKINDKKPIKTWSRRSTIFPNMVGLTISIHNGRSHIPVFVTEEMVGHKLGEFSLTRTYRGHTADKKVKKR</sequence>
<accession>P57587</accession>